<keyword id="KW-0227">DNA damage</keyword>
<keyword id="KW-0234">DNA repair</keyword>
<keyword id="KW-0378">Hydrolase</keyword>
<keyword id="KW-1185">Reference proteome</keyword>
<accession>Q8KBD5</accession>
<organism>
    <name type="scientific">Chlorobaculum tepidum (strain ATCC 49652 / DSM 12025 / NBRC 103806 / TLS)</name>
    <name type="common">Chlorobium tepidum</name>
    <dbReference type="NCBI Taxonomy" id="194439"/>
    <lineage>
        <taxon>Bacteria</taxon>
        <taxon>Pseudomonadati</taxon>
        <taxon>Chlorobiota</taxon>
        <taxon>Chlorobiia</taxon>
        <taxon>Chlorobiales</taxon>
        <taxon>Chlorobiaceae</taxon>
        <taxon>Chlorobaculum</taxon>
    </lineage>
</organism>
<comment type="similarity">
    <text evidence="1">Belongs to the DNA glycosylase MPG family.</text>
</comment>
<name>3MGH_CHLTE</name>
<proteinExistence type="inferred from homology"/>
<protein>
    <recommendedName>
        <fullName evidence="1">Putative 3-methyladenine DNA glycosylase</fullName>
        <ecNumber evidence="1">3.2.2.-</ecNumber>
    </recommendedName>
</protein>
<reference key="1">
    <citation type="journal article" date="2002" name="Proc. Natl. Acad. Sci. U.S.A.">
        <title>The complete genome sequence of Chlorobium tepidum TLS, a photosynthetic, anaerobic, green-sulfur bacterium.</title>
        <authorList>
            <person name="Eisen J.A."/>
            <person name="Nelson K.E."/>
            <person name="Paulsen I.T."/>
            <person name="Heidelberg J.F."/>
            <person name="Wu M."/>
            <person name="Dodson R.J."/>
            <person name="DeBoy R.T."/>
            <person name="Gwinn M.L."/>
            <person name="Nelson W.C."/>
            <person name="Haft D.H."/>
            <person name="Hickey E.K."/>
            <person name="Peterson J.D."/>
            <person name="Durkin A.S."/>
            <person name="Kolonay J.F."/>
            <person name="Yang F."/>
            <person name="Holt I.E."/>
            <person name="Umayam L.A."/>
            <person name="Mason T.M."/>
            <person name="Brenner M."/>
            <person name="Shea T.P."/>
            <person name="Parksey D.S."/>
            <person name="Nierman W.C."/>
            <person name="Feldblyum T.V."/>
            <person name="Hansen C.L."/>
            <person name="Craven M.B."/>
            <person name="Radune D."/>
            <person name="Vamathevan J.J."/>
            <person name="Khouri H.M."/>
            <person name="White O."/>
            <person name="Gruber T.M."/>
            <person name="Ketchum K.A."/>
            <person name="Venter J.C."/>
            <person name="Tettelin H."/>
            <person name="Bryant D.A."/>
            <person name="Fraser C.M."/>
        </authorList>
    </citation>
    <scope>NUCLEOTIDE SEQUENCE [LARGE SCALE GENOMIC DNA]</scope>
    <source>
        <strain>ATCC 49652 / DSM 12025 / NBRC 103806 / TLS</strain>
    </source>
</reference>
<sequence>MKRLGADFYQMPTILLAERLLGKIFVHHEVSGRVTKGRIVETEAYLGDGDEACHAWRGMTERNHVMFGPPGHLYIYFSYGCHYLANIVSEQKGIAGAVLLRAMEPIEGIEWMQERRGTTDERALMSGPGKLTQALGLGPAHYGESLLGDICWLEEAPDIPPELIGTSPRIGISRSTDLLWRKFIAGSPYISKTQPGPPPKKRKKGLESS</sequence>
<gene>
    <name type="ordered locus">CT1853</name>
</gene>
<feature type="chain" id="PRO_0000100078" description="Putative 3-methyladenine DNA glycosylase">
    <location>
        <begin position="1"/>
        <end position="209"/>
    </location>
</feature>
<feature type="region of interest" description="Disordered" evidence="2">
    <location>
        <begin position="189"/>
        <end position="209"/>
    </location>
</feature>
<feature type="compositionally biased region" description="Basic residues" evidence="2">
    <location>
        <begin position="199"/>
        <end position="209"/>
    </location>
</feature>
<evidence type="ECO:0000255" key="1">
    <source>
        <dbReference type="HAMAP-Rule" id="MF_00527"/>
    </source>
</evidence>
<evidence type="ECO:0000256" key="2">
    <source>
        <dbReference type="SAM" id="MobiDB-lite"/>
    </source>
</evidence>
<dbReference type="EC" id="3.2.2.-" evidence="1"/>
<dbReference type="EMBL" id="AE006470">
    <property type="protein sequence ID" value="AAM73073.1"/>
    <property type="molecule type" value="Genomic_DNA"/>
</dbReference>
<dbReference type="RefSeq" id="NP_662731.1">
    <property type="nucleotide sequence ID" value="NC_002932.3"/>
</dbReference>
<dbReference type="RefSeq" id="WP_010933512.1">
    <property type="nucleotide sequence ID" value="NC_002932.3"/>
</dbReference>
<dbReference type="SMR" id="Q8KBD5"/>
<dbReference type="STRING" id="194439.CT1853"/>
<dbReference type="EnsemblBacteria" id="AAM73073">
    <property type="protein sequence ID" value="AAM73073"/>
    <property type="gene ID" value="CT1853"/>
</dbReference>
<dbReference type="KEGG" id="cte:CT1853"/>
<dbReference type="PATRIC" id="fig|194439.7.peg.1682"/>
<dbReference type="eggNOG" id="COG2094">
    <property type="taxonomic scope" value="Bacteria"/>
</dbReference>
<dbReference type="HOGENOM" id="CLU_060471_3_0_10"/>
<dbReference type="OrthoDB" id="9794313at2"/>
<dbReference type="Proteomes" id="UP000001007">
    <property type="component" value="Chromosome"/>
</dbReference>
<dbReference type="GO" id="GO:0003905">
    <property type="term" value="F:alkylbase DNA N-glycosylase activity"/>
    <property type="evidence" value="ECO:0007669"/>
    <property type="project" value="InterPro"/>
</dbReference>
<dbReference type="GO" id="GO:0003677">
    <property type="term" value="F:DNA binding"/>
    <property type="evidence" value="ECO:0007669"/>
    <property type="project" value="InterPro"/>
</dbReference>
<dbReference type="GO" id="GO:0006284">
    <property type="term" value="P:base-excision repair"/>
    <property type="evidence" value="ECO:0007669"/>
    <property type="project" value="InterPro"/>
</dbReference>
<dbReference type="CDD" id="cd00540">
    <property type="entry name" value="AAG"/>
    <property type="match status" value="1"/>
</dbReference>
<dbReference type="FunFam" id="3.10.300.10:FF:000001">
    <property type="entry name" value="Putative 3-methyladenine DNA glycosylase"/>
    <property type="match status" value="1"/>
</dbReference>
<dbReference type="Gene3D" id="3.10.300.10">
    <property type="entry name" value="Methylpurine-DNA glycosylase (MPG)"/>
    <property type="match status" value="1"/>
</dbReference>
<dbReference type="HAMAP" id="MF_00527">
    <property type="entry name" value="3MGH"/>
    <property type="match status" value="1"/>
</dbReference>
<dbReference type="InterPro" id="IPR011034">
    <property type="entry name" value="Formyl_transferase-like_C_sf"/>
</dbReference>
<dbReference type="InterPro" id="IPR003180">
    <property type="entry name" value="MPG"/>
</dbReference>
<dbReference type="InterPro" id="IPR036995">
    <property type="entry name" value="MPG_sf"/>
</dbReference>
<dbReference type="NCBIfam" id="TIGR00567">
    <property type="entry name" value="3mg"/>
    <property type="match status" value="1"/>
</dbReference>
<dbReference type="NCBIfam" id="NF002003">
    <property type="entry name" value="PRK00802.1-3"/>
    <property type="match status" value="1"/>
</dbReference>
<dbReference type="PANTHER" id="PTHR10429">
    <property type="entry name" value="DNA-3-METHYLADENINE GLYCOSYLASE"/>
    <property type="match status" value="1"/>
</dbReference>
<dbReference type="PANTHER" id="PTHR10429:SF0">
    <property type="entry name" value="DNA-3-METHYLADENINE GLYCOSYLASE"/>
    <property type="match status" value="1"/>
</dbReference>
<dbReference type="Pfam" id="PF02245">
    <property type="entry name" value="Pur_DNA_glyco"/>
    <property type="match status" value="1"/>
</dbReference>
<dbReference type="SUPFAM" id="SSF50486">
    <property type="entry name" value="FMT C-terminal domain-like"/>
    <property type="match status" value="1"/>
</dbReference>